<dbReference type="EC" id="2.7.11.22"/>
<dbReference type="EC" id="2.7.11.23"/>
<dbReference type="EMBL" id="HE601459">
    <property type="protein sequence ID" value="CAP29526.1"/>
    <property type="molecule type" value="Genomic_DNA"/>
</dbReference>
<dbReference type="SMR" id="A8XA58"/>
<dbReference type="FunCoup" id="A8XA58">
    <property type="interactions" value="2315"/>
</dbReference>
<dbReference type="STRING" id="6238.A8XA58"/>
<dbReference type="KEGG" id="cbr:CBG_10007"/>
<dbReference type="CTD" id="8583671"/>
<dbReference type="WormBase" id="CBG10007">
    <property type="protein sequence ID" value="CBP38771"/>
    <property type="gene ID" value="WBGene00031495"/>
    <property type="gene designation" value="Cbr-cdk-1"/>
</dbReference>
<dbReference type="eggNOG" id="KOG0594">
    <property type="taxonomic scope" value="Eukaryota"/>
</dbReference>
<dbReference type="HOGENOM" id="CLU_000288_181_6_1"/>
<dbReference type="InParanoid" id="A8XA58"/>
<dbReference type="OMA" id="YLYQITR"/>
<dbReference type="Proteomes" id="UP000008549">
    <property type="component" value="Unassembled WGS sequence"/>
</dbReference>
<dbReference type="GO" id="GO:0005813">
    <property type="term" value="C:centrosome"/>
    <property type="evidence" value="ECO:0007669"/>
    <property type="project" value="UniProtKB-SubCell"/>
</dbReference>
<dbReference type="GO" id="GO:0005737">
    <property type="term" value="C:cytoplasm"/>
    <property type="evidence" value="ECO:0007669"/>
    <property type="project" value="UniProtKB-KW"/>
</dbReference>
<dbReference type="GO" id="GO:0005634">
    <property type="term" value="C:nucleus"/>
    <property type="evidence" value="ECO:0000318"/>
    <property type="project" value="GO_Central"/>
</dbReference>
<dbReference type="GO" id="GO:0005524">
    <property type="term" value="F:ATP binding"/>
    <property type="evidence" value="ECO:0007669"/>
    <property type="project" value="UniProtKB-KW"/>
</dbReference>
<dbReference type="GO" id="GO:0004693">
    <property type="term" value="F:cyclin-dependent protein serine/threonine kinase activity"/>
    <property type="evidence" value="ECO:0000318"/>
    <property type="project" value="GO_Central"/>
</dbReference>
<dbReference type="GO" id="GO:0019901">
    <property type="term" value="F:protein kinase binding"/>
    <property type="evidence" value="ECO:0000250"/>
    <property type="project" value="UniProtKB"/>
</dbReference>
<dbReference type="GO" id="GO:0106310">
    <property type="term" value="F:protein serine kinase activity"/>
    <property type="evidence" value="ECO:0007669"/>
    <property type="project" value="RHEA"/>
</dbReference>
<dbReference type="GO" id="GO:0008353">
    <property type="term" value="F:RNA polymerase II CTD heptapeptide repeat kinase activity"/>
    <property type="evidence" value="ECO:0007669"/>
    <property type="project" value="UniProtKB-EC"/>
</dbReference>
<dbReference type="GO" id="GO:0051301">
    <property type="term" value="P:cell division"/>
    <property type="evidence" value="ECO:0000250"/>
    <property type="project" value="UniProtKB"/>
</dbReference>
<dbReference type="GO" id="GO:0000086">
    <property type="term" value="P:G2/M transition of mitotic cell cycle"/>
    <property type="evidence" value="ECO:0000318"/>
    <property type="project" value="GO_Central"/>
</dbReference>
<dbReference type="GO" id="GO:0007095">
    <property type="term" value="P:mitotic G2 DNA damage checkpoint signaling"/>
    <property type="evidence" value="ECO:0000318"/>
    <property type="project" value="GO_Central"/>
</dbReference>
<dbReference type="GO" id="GO:0051446">
    <property type="term" value="P:positive regulation of meiotic cell cycle"/>
    <property type="evidence" value="ECO:0000250"/>
    <property type="project" value="UniProtKB"/>
</dbReference>
<dbReference type="FunFam" id="1.10.510.10:FF:000706">
    <property type="entry name" value="Cyclin-dependent kinase 1"/>
    <property type="match status" value="1"/>
</dbReference>
<dbReference type="FunFam" id="3.30.200.20:FF:000027">
    <property type="entry name" value="Putative Cyclin-dependent kinase 1"/>
    <property type="match status" value="1"/>
</dbReference>
<dbReference type="Gene3D" id="3.30.200.20">
    <property type="entry name" value="Phosphorylase Kinase, domain 1"/>
    <property type="match status" value="1"/>
</dbReference>
<dbReference type="Gene3D" id="1.10.510.10">
    <property type="entry name" value="Transferase(Phosphotransferase) domain 1"/>
    <property type="match status" value="1"/>
</dbReference>
<dbReference type="InterPro" id="IPR050108">
    <property type="entry name" value="CDK"/>
</dbReference>
<dbReference type="InterPro" id="IPR011009">
    <property type="entry name" value="Kinase-like_dom_sf"/>
</dbReference>
<dbReference type="InterPro" id="IPR000719">
    <property type="entry name" value="Prot_kinase_dom"/>
</dbReference>
<dbReference type="InterPro" id="IPR017441">
    <property type="entry name" value="Protein_kinase_ATP_BS"/>
</dbReference>
<dbReference type="InterPro" id="IPR008271">
    <property type="entry name" value="Ser/Thr_kinase_AS"/>
</dbReference>
<dbReference type="PANTHER" id="PTHR24056">
    <property type="entry name" value="CELL DIVISION PROTEIN KINASE"/>
    <property type="match status" value="1"/>
</dbReference>
<dbReference type="PANTHER" id="PTHR24056:SF334">
    <property type="entry name" value="CYCLIN-DEPENDENT KINASE 1"/>
    <property type="match status" value="1"/>
</dbReference>
<dbReference type="Pfam" id="PF00069">
    <property type="entry name" value="Pkinase"/>
    <property type="match status" value="1"/>
</dbReference>
<dbReference type="SMART" id="SM00220">
    <property type="entry name" value="S_TKc"/>
    <property type="match status" value="1"/>
</dbReference>
<dbReference type="SUPFAM" id="SSF56112">
    <property type="entry name" value="Protein kinase-like (PK-like)"/>
    <property type="match status" value="1"/>
</dbReference>
<dbReference type="PROSITE" id="PS00107">
    <property type="entry name" value="PROTEIN_KINASE_ATP"/>
    <property type="match status" value="1"/>
</dbReference>
<dbReference type="PROSITE" id="PS50011">
    <property type="entry name" value="PROTEIN_KINASE_DOM"/>
    <property type="match status" value="1"/>
</dbReference>
<dbReference type="PROSITE" id="PS00108">
    <property type="entry name" value="PROTEIN_KINASE_ST"/>
    <property type="match status" value="1"/>
</dbReference>
<name>CDK1_CAEBR</name>
<sequence>MTAIRKNDMNYTLDDFTKLEKIGEGTYGVVYKGRNRRTQAMVAMKKIRLESEDEGVPSTAVREISLLKELQHPNVVGLEAVIMQENRLYLIFEFLSYDLKRYMDTLSKEEYLPSETLKSYTFQILQAMCFCHQRRVIHRDLKPQNLLVDEKGAIKLADFGLARAIGIPIRVYTHEVVTLWYRAPEILMGAQRYSMGVDMWSIGCIFAEMATKKPLFQGDSEIDELFRIFRILGTPTELEWNGVESLPDYKATFPKWRENFLRDKFYDKKSGNYLMDEDAFSLLEGLLIYDPALRISSKKALHHPYFNDIDTSKLPAGNYRGELQLE</sequence>
<evidence type="ECO:0000250" key="1"/>
<evidence type="ECO:0000250" key="2">
    <source>
        <dbReference type="UniProtKB" id="P06493"/>
    </source>
</evidence>
<evidence type="ECO:0000250" key="3">
    <source>
        <dbReference type="UniProtKB" id="P34556"/>
    </source>
</evidence>
<evidence type="ECO:0000250" key="4">
    <source>
        <dbReference type="UniProtKB" id="P39951"/>
    </source>
</evidence>
<evidence type="ECO:0000255" key="5"/>
<evidence type="ECO:0000255" key="6">
    <source>
        <dbReference type="PROSITE-ProRule" id="PRU00159"/>
    </source>
</evidence>
<evidence type="ECO:0000255" key="7">
    <source>
        <dbReference type="PROSITE-ProRule" id="PRU10027"/>
    </source>
</evidence>
<evidence type="ECO:0000312" key="8">
    <source>
        <dbReference type="EMBL" id="CAP29526.1"/>
    </source>
</evidence>
<organism>
    <name type="scientific">Caenorhabditis briggsae</name>
    <dbReference type="NCBI Taxonomy" id="6238"/>
    <lineage>
        <taxon>Eukaryota</taxon>
        <taxon>Metazoa</taxon>
        <taxon>Ecdysozoa</taxon>
        <taxon>Nematoda</taxon>
        <taxon>Chromadorea</taxon>
        <taxon>Rhabditida</taxon>
        <taxon>Rhabditina</taxon>
        <taxon>Rhabditomorpha</taxon>
        <taxon>Rhabditoidea</taxon>
        <taxon>Rhabditidae</taxon>
        <taxon>Peloderinae</taxon>
        <taxon>Caenorhabditis</taxon>
    </lineage>
</organism>
<feature type="chain" id="PRO_0000353199" description="Cyclin-dependent kinase 1">
    <location>
        <begin position="1"/>
        <end position="326"/>
    </location>
</feature>
<feature type="domain" description="Protein kinase" evidence="6">
    <location>
        <begin position="16"/>
        <end position="306"/>
    </location>
</feature>
<feature type="active site" description="Proton acceptor" evidence="6 7">
    <location>
        <position position="140"/>
    </location>
</feature>
<feature type="binding site" evidence="6">
    <location>
        <begin position="22"/>
        <end position="30"/>
    </location>
    <ligand>
        <name>ATP</name>
        <dbReference type="ChEBI" id="CHEBI:30616"/>
    </ligand>
</feature>
<feature type="binding site" evidence="6">
    <location>
        <position position="45"/>
    </location>
    <ligand>
        <name>ATP</name>
        <dbReference type="ChEBI" id="CHEBI:30616"/>
    </ligand>
</feature>
<protein>
    <recommendedName>
        <fullName>Cyclin-dependent kinase 1</fullName>
        <shortName>CDK1</shortName>
        <ecNumber>2.7.11.22</ecNumber>
        <ecNumber>2.7.11.23</ecNumber>
    </recommendedName>
    <alternativeName>
        <fullName evidence="2">Cell division control protein 2 homolog</fullName>
    </alternativeName>
    <alternativeName>
        <fullName>Cell division protein kinase 1</fullName>
    </alternativeName>
</protein>
<proteinExistence type="inferred from homology"/>
<accession>A8XA58</accession>
<gene>
    <name evidence="8" type="primary">cdk-1</name>
    <name type="ORF">CBG10007</name>
</gene>
<comment type="function">
    <text evidence="2 3">Plays a key role in the control of the eukaryotic cell cycle (By similarity). Required for entry into S-phase and mitosis (By similarity). Acts as a component of the kinase complex that phosphorylates the repetitive C-terminus of RNA polymerase II (By similarity). May function in concert with npp-16 to arrest prophase blastomeres in response to anoxia (By similarity).</text>
</comment>
<comment type="catalytic activity">
    <reaction evidence="2">
        <text>L-seryl-[protein] + ATP = O-phospho-L-seryl-[protein] + ADP + H(+)</text>
        <dbReference type="Rhea" id="RHEA:17989"/>
        <dbReference type="Rhea" id="RHEA-COMP:9863"/>
        <dbReference type="Rhea" id="RHEA-COMP:11604"/>
        <dbReference type="ChEBI" id="CHEBI:15378"/>
        <dbReference type="ChEBI" id="CHEBI:29999"/>
        <dbReference type="ChEBI" id="CHEBI:30616"/>
        <dbReference type="ChEBI" id="CHEBI:83421"/>
        <dbReference type="ChEBI" id="CHEBI:456216"/>
        <dbReference type="EC" id="2.7.11.22"/>
    </reaction>
</comment>
<comment type="catalytic activity">
    <reaction evidence="2">
        <text>L-threonyl-[protein] + ATP = O-phospho-L-threonyl-[protein] + ADP + H(+)</text>
        <dbReference type="Rhea" id="RHEA:46608"/>
        <dbReference type="Rhea" id="RHEA-COMP:11060"/>
        <dbReference type="Rhea" id="RHEA-COMP:11605"/>
        <dbReference type="ChEBI" id="CHEBI:15378"/>
        <dbReference type="ChEBI" id="CHEBI:30013"/>
        <dbReference type="ChEBI" id="CHEBI:30616"/>
        <dbReference type="ChEBI" id="CHEBI:61977"/>
        <dbReference type="ChEBI" id="CHEBI:456216"/>
        <dbReference type="EC" id="2.7.11.22"/>
    </reaction>
</comment>
<comment type="catalytic activity">
    <reaction evidence="2">
        <text>[DNA-directed RNA polymerase] + ATP = phospho-[DNA-directed RNA polymerase] + ADP + H(+)</text>
        <dbReference type="Rhea" id="RHEA:10216"/>
        <dbReference type="Rhea" id="RHEA-COMP:11321"/>
        <dbReference type="Rhea" id="RHEA-COMP:11322"/>
        <dbReference type="ChEBI" id="CHEBI:15378"/>
        <dbReference type="ChEBI" id="CHEBI:30616"/>
        <dbReference type="ChEBI" id="CHEBI:43176"/>
        <dbReference type="ChEBI" id="CHEBI:68546"/>
        <dbReference type="ChEBI" id="CHEBI:456216"/>
        <dbReference type="EC" id="2.7.11.23"/>
    </reaction>
</comment>
<comment type="activity regulation">
    <text evidence="3">Phosphorylation both activates and inactivates the enzyme depending on the site of phosphorylation.</text>
</comment>
<comment type="subunit">
    <text evidence="2 3">Forms a stable but non-covalent complex with a regulatory subunit and with a cyclin. Interacts with cks-1 (By similarity).</text>
</comment>
<comment type="subcellular location">
    <subcellularLocation>
        <location evidence="4">Nucleus</location>
    </subcellularLocation>
    <subcellularLocation>
        <location evidence="1">Cytoplasm</location>
        <location evidence="1">Cytoskeleton</location>
        <location evidence="1">Microtubule organizing center</location>
        <location evidence="1">Centrosome</location>
    </subcellularLocation>
</comment>
<comment type="similarity">
    <text evidence="5">Belongs to the protein kinase superfamily. CMGC Ser/Thr protein kinase family. CDC2/CDKX subfamily.</text>
</comment>
<reference evidence="8" key="1">
    <citation type="journal article" date="2003" name="PLoS Biol.">
        <title>The genome sequence of Caenorhabditis briggsae: a platform for comparative genomics.</title>
        <authorList>
            <person name="Stein L.D."/>
            <person name="Bao Z."/>
            <person name="Blasiar D."/>
            <person name="Blumenthal T."/>
            <person name="Brent M.R."/>
            <person name="Chen N."/>
            <person name="Chinwalla A."/>
            <person name="Clarke L."/>
            <person name="Clee C."/>
            <person name="Coghlan A."/>
            <person name="Coulson A."/>
            <person name="D'Eustachio P."/>
            <person name="Fitch D.H.A."/>
            <person name="Fulton L.A."/>
            <person name="Fulton R.E."/>
            <person name="Griffiths-Jones S."/>
            <person name="Harris T.W."/>
            <person name="Hillier L.W."/>
            <person name="Kamath R."/>
            <person name="Kuwabara P.E."/>
            <person name="Mardis E.R."/>
            <person name="Marra M.A."/>
            <person name="Miner T.L."/>
            <person name="Minx P."/>
            <person name="Mullikin J.C."/>
            <person name="Plumb R.W."/>
            <person name="Rogers J."/>
            <person name="Schein J.E."/>
            <person name="Sohrmann M."/>
            <person name="Spieth J."/>
            <person name="Stajich J.E."/>
            <person name="Wei C."/>
            <person name="Willey D."/>
            <person name="Wilson R.K."/>
            <person name="Durbin R.M."/>
            <person name="Waterston R.H."/>
        </authorList>
    </citation>
    <scope>NUCLEOTIDE SEQUENCE [LARGE SCALE GENOMIC DNA]</scope>
    <source>
        <strain evidence="8">AF16</strain>
    </source>
</reference>
<keyword id="KW-0067">ATP-binding</keyword>
<keyword id="KW-0131">Cell cycle</keyword>
<keyword id="KW-0132">Cell division</keyword>
<keyword id="KW-0963">Cytoplasm</keyword>
<keyword id="KW-0206">Cytoskeleton</keyword>
<keyword id="KW-0418">Kinase</keyword>
<keyword id="KW-0498">Mitosis</keyword>
<keyword id="KW-0547">Nucleotide-binding</keyword>
<keyword id="KW-0539">Nucleus</keyword>
<keyword id="KW-0597">Phosphoprotein</keyword>
<keyword id="KW-1185">Reference proteome</keyword>
<keyword id="KW-0723">Serine/threonine-protein kinase</keyword>
<keyword id="KW-0808">Transferase</keyword>